<reference key="1">
    <citation type="submission" date="2005-10" db="EMBL/GenBank/DDBJ databases">
        <title>NISC comparative sequencing initiative.</title>
        <authorList>
            <person name="Antonellis A."/>
            <person name="Ayele K."/>
            <person name="Benjamin B."/>
            <person name="Blakesley R.W."/>
            <person name="Boakye A."/>
            <person name="Bouffard G.G."/>
            <person name="Brinkley C."/>
            <person name="Brooks S."/>
            <person name="Chu G."/>
            <person name="Coleman H."/>
            <person name="Engle J."/>
            <person name="Gestole M."/>
            <person name="Greene A."/>
            <person name="Guan X."/>
            <person name="Gupta J."/>
            <person name="Haghighi P."/>
            <person name="Han J."/>
            <person name="Hansen N."/>
            <person name="Ho S.-L."/>
            <person name="Hu P."/>
            <person name="Hunter G."/>
            <person name="Hurle B."/>
            <person name="Idol J.R."/>
            <person name="Kwong P."/>
            <person name="Laric P."/>
            <person name="Larson S."/>
            <person name="Lee-Lin S.-Q."/>
            <person name="Legaspi R."/>
            <person name="Madden M."/>
            <person name="Maduro Q.L."/>
            <person name="Maduro V.B."/>
            <person name="Margulies E.H."/>
            <person name="Masiello C."/>
            <person name="Maskeri B."/>
            <person name="McDowell J."/>
            <person name="Mojidi H.A."/>
            <person name="Mullikin J.C."/>
            <person name="Oestreicher J.S."/>
            <person name="Park M."/>
            <person name="Portnoy M.E."/>
            <person name="Prasad A."/>
            <person name="Puri O."/>
            <person name="Reddix-Dugue N."/>
            <person name="Schandler K."/>
            <person name="Schueler M.G."/>
            <person name="Sison C."/>
            <person name="Stantripop S."/>
            <person name="Stephen E."/>
            <person name="Taye A."/>
            <person name="Thomas J.W."/>
            <person name="Thomas P.J."/>
            <person name="Tsipouri V."/>
            <person name="Ung L."/>
            <person name="Vogt J.L."/>
            <person name="Wetherby K.D."/>
            <person name="Young A."/>
            <person name="Green E.D."/>
        </authorList>
    </citation>
    <scope>NUCLEOTIDE SEQUENCE [LARGE SCALE GENOMIC DNA]</scope>
</reference>
<keyword id="KW-0040">ANK repeat</keyword>
<keyword id="KW-0963">Cytoplasm</keyword>
<keyword id="KW-0217">Developmental protein</keyword>
<keyword id="KW-0221">Differentiation</keyword>
<keyword id="KW-0469">Meiosis</keyword>
<keyword id="KW-0597">Phosphoprotein</keyword>
<keyword id="KW-1185">Reference proteome</keyword>
<keyword id="KW-0677">Repeat</keyword>
<keyword id="KW-0943">RNA-mediated gene silencing</keyword>
<keyword id="KW-0744">Spermatogenesis</keyword>
<feature type="chain" id="PRO_0000226356" description="Ankyrin repeat, SAM and basic leucine zipper domain-containing protein 1">
    <location>
        <begin position="1"/>
        <end position="477"/>
    </location>
</feature>
<feature type="repeat" description="ANK 1">
    <location>
        <begin position="46"/>
        <end position="76"/>
    </location>
</feature>
<feature type="repeat" description="ANK 2">
    <location>
        <begin position="80"/>
        <end position="109"/>
    </location>
</feature>
<feature type="repeat" description="ANK 3">
    <location>
        <begin position="112"/>
        <end position="146"/>
    </location>
</feature>
<feature type="repeat" description="ANK 4">
    <location>
        <begin position="150"/>
        <end position="179"/>
    </location>
</feature>
<feature type="repeat" description="ANK 5">
    <location>
        <begin position="183"/>
        <end position="212"/>
    </location>
</feature>
<feature type="repeat" description="ANK 6">
    <location>
        <begin position="216"/>
        <end position="245"/>
    </location>
</feature>
<feature type="domain" description="SAM">
    <location>
        <begin position="274"/>
        <end position="336"/>
    </location>
</feature>
<feature type="modified residue" description="Phosphoserine" evidence="2">
    <location>
        <position position="17"/>
    </location>
</feature>
<feature type="modified residue" description="Phosphoserine" evidence="2">
    <location>
        <position position="18"/>
    </location>
</feature>
<feature type="modified residue" description="Phosphoserine" evidence="2">
    <location>
        <position position="20"/>
    </location>
</feature>
<comment type="function">
    <text evidence="1">Plays a central role during spermatogenesis by repressing transposable elements and preventing their mobilization, which is essential for the germline integrity. Acts via the piRNA metabolic process, which mediates the repression of transposable elements during meiosis by forming complexes composed of piRNAs and Piwi proteins and governs the methylation and subsequent repression of transposons. Its association with pi-bodies suggests a participation in the primary piRNAs metabolic process. Required prior to the pachytene stage to facilitate the production of multiple types of piRNAs, including those associated with repeats involved in the regulation of retrotransposons. May act by mediating protein-protein interactions during germ cell maturation (By similarity).</text>
</comment>
<comment type="subunit">
    <text evidence="1">Interacts with DDX4, PIWIL1, RANBP9 and TDRD1.</text>
</comment>
<comment type="subcellular location">
    <subcellularLocation>
        <location evidence="1">Cytoplasm</location>
    </subcellularLocation>
    <text evidence="1">Component of the meiotic nuage, also named P granule, a germ-cell-specific organelle required to repress transposon activity during meiosis. Specifically localizes to pi-bodies, a subset of the nuage which contains primary piRNAs (By similarity).</text>
</comment>
<protein>
    <recommendedName>
        <fullName>Ankyrin repeat, SAM and basic leucine zipper domain-containing protein 1</fullName>
    </recommendedName>
    <alternativeName>
        <fullName>Germ cell-specific ankyrin, SAM and basic leucine zipper domain-containing protein</fullName>
    </alternativeName>
</protein>
<sequence length="477" mass="53374">MAASALRGLAVAGGGESSESEDDGWEIGYLDRTSQKLKGQMLPIEEKKEKFKKALTTGDVSLVLELLDSGIISVDATFRYGWTPLMYAASVANAELVRVLLDRGANASFEKDKQTILITACSAHGSEEQILKCVELLLSRNADPNVACRRLMTPIMYAARDGHTQVVALLVASGAEVNTQDENGYTALTWAARQGHKSIVLKLLELGANKMLQTKDGKLPSEIAKRNKHHEIFNLLTFTLNPLEGKLQQLTKEETICKILTTDSDRENDHIFSSYAAFGDLEVFLHGLGLEHMTDLLKERDITLRQLLTMREDEFTKNGFTSKDQQKILAALKELEVEEIPFGELSEEAKLEISGDEFLNFLLKLNKQCGHLITAVQNIITELPVNSQKIALEWASPQNFTSVCEELVNNVEDLSEEVCNLKDLIQKLQNERENDPTHIPLREEVSTWNSRILKRTAITVCGFGFLFFICKITFQRK</sequence>
<evidence type="ECO:0000250" key="1"/>
<evidence type="ECO:0000250" key="2">
    <source>
        <dbReference type="UniProtKB" id="Q8VD46"/>
    </source>
</evidence>
<name>ASZ1_CALJA</name>
<dbReference type="EMBL" id="DP000014">
    <property type="protein sequence ID" value="ABA90396.1"/>
    <property type="molecule type" value="Genomic_DNA"/>
</dbReference>
<dbReference type="RefSeq" id="XP_002751823.1">
    <property type="nucleotide sequence ID" value="XM_002751777.5"/>
</dbReference>
<dbReference type="SMR" id="Q2QLG0"/>
<dbReference type="FunCoup" id="Q2QLG0">
    <property type="interactions" value="23"/>
</dbReference>
<dbReference type="STRING" id="9483.ENSCJAP00000009092"/>
<dbReference type="GeneID" id="100411662"/>
<dbReference type="KEGG" id="cjc:100411662"/>
<dbReference type="CTD" id="136991"/>
<dbReference type="eggNOG" id="KOG0504">
    <property type="taxonomic scope" value="Eukaryota"/>
</dbReference>
<dbReference type="InParanoid" id="Q2QLG0"/>
<dbReference type="OrthoDB" id="439236at2759"/>
<dbReference type="TreeFam" id="TF352216"/>
<dbReference type="Proteomes" id="UP000008225">
    <property type="component" value="Chromosome 8"/>
</dbReference>
<dbReference type="Bgee" id="ENSCJAG00000004944">
    <property type="expression patterns" value="Expressed in testis and 1 other cell type or tissue"/>
</dbReference>
<dbReference type="GO" id="GO:0071546">
    <property type="term" value="C:pi-body"/>
    <property type="evidence" value="ECO:0000250"/>
    <property type="project" value="UniProtKB"/>
</dbReference>
<dbReference type="GO" id="GO:0030154">
    <property type="term" value="P:cell differentiation"/>
    <property type="evidence" value="ECO:0007669"/>
    <property type="project" value="UniProtKB-KW"/>
</dbReference>
<dbReference type="GO" id="GO:0007140">
    <property type="term" value="P:male meiotic nuclear division"/>
    <property type="evidence" value="ECO:0000250"/>
    <property type="project" value="UniProtKB"/>
</dbReference>
<dbReference type="GO" id="GO:0031047">
    <property type="term" value="P:regulatory ncRNA-mediated gene silencing"/>
    <property type="evidence" value="ECO:0007669"/>
    <property type="project" value="UniProtKB-KW"/>
</dbReference>
<dbReference type="GO" id="GO:0007283">
    <property type="term" value="P:spermatogenesis"/>
    <property type="evidence" value="ECO:0000250"/>
    <property type="project" value="UniProtKB"/>
</dbReference>
<dbReference type="GO" id="GO:0010526">
    <property type="term" value="P:transposable element silencing"/>
    <property type="evidence" value="ECO:0000250"/>
    <property type="project" value="UniProtKB"/>
</dbReference>
<dbReference type="CDD" id="cd09521">
    <property type="entry name" value="SAM_ASZ1"/>
    <property type="match status" value="1"/>
</dbReference>
<dbReference type="FunFam" id="1.25.40.20:FF:000192">
    <property type="entry name" value="Ankyrin repeat, SAM and basic leucine zipper domain-containing 1"/>
    <property type="match status" value="1"/>
</dbReference>
<dbReference type="FunFam" id="1.10.150.50:FF:000060">
    <property type="entry name" value="Ankyrin repeat, SAM and basic leucine zipper domain-containing protein 1"/>
    <property type="match status" value="1"/>
</dbReference>
<dbReference type="Gene3D" id="1.25.40.20">
    <property type="entry name" value="Ankyrin repeat-containing domain"/>
    <property type="match status" value="2"/>
</dbReference>
<dbReference type="Gene3D" id="1.10.150.50">
    <property type="entry name" value="Transcription Factor, Ets-1"/>
    <property type="match status" value="1"/>
</dbReference>
<dbReference type="InterPro" id="IPR002110">
    <property type="entry name" value="Ankyrin_rpt"/>
</dbReference>
<dbReference type="InterPro" id="IPR036770">
    <property type="entry name" value="Ankyrin_rpt-contain_sf"/>
</dbReference>
<dbReference type="InterPro" id="IPR042650">
    <property type="entry name" value="Asz1_SAM"/>
</dbReference>
<dbReference type="InterPro" id="IPR001660">
    <property type="entry name" value="SAM"/>
</dbReference>
<dbReference type="InterPro" id="IPR013761">
    <property type="entry name" value="SAM/pointed_sf"/>
</dbReference>
<dbReference type="PANTHER" id="PTHR24157">
    <property type="entry name" value="ANKYRIN REPEAT, SAM AND BASIC LEUCINE ZIPPER DOMAIN-CONTAINING PROTEIN 1"/>
    <property type="match status" value="1"/>
</dbReference>
<dbReference type="PANTHER" id="PTHR24157:SF3">
    <property type="entry name" value="ANKYRIN REPEAT, SAM AND BASIC LEUCINE ZIPPER DOMAIN-CONTAINING PROTEIN 1"/>
    <property type="match status" value="1"/>
</dbReference>
<dbReference type="Pfam" id="PF00023">
    <property type="entry name" value="Ank"/>
    <property type="match status" value="1"/>
</dbReference>
<dbReference type="Pfam" id="PF12796">
    <property type="entry name" value="Ank_2"/>
    <property type="match status" value="1"/>
</dbReference>
<dbReference type="Pfam" id="PF07647">
    <property type="entry name" value="SAM_2"/>
    <property type="match status" value="1"/>
</dbReference>
<dbReference type="PRINTS" id="PR01415">
    <property type="entry name" value="ANKYRIN"/>
</dbReference>
<dbReference type="SMART" id="SM00248">
    <property type="entry name" value="ANK"/>
    <property type="match status" value="4"/>
</dbReference>
<dbReference type="SUPFAM" id="SSF48403">
    <property type="entry name" value="Ankyrin repeat"/>
    <property type="match status" value="1"/>
</dbReference>
<dbReference type="SUPFAM" id="SSF140860">
    <property type="entry name" value="Pseudo ankyrin repeat-like"/>
    <property type="match status" value="1"/>
</dbReference>
<dbReference type="PROSITE" id="PS50297">
    <property type="entry name" value="ANK_REP_REGION"/>
    <property type="match status" value="1"/>
</dbReference>
<dbReference type="PROSITE" id="PS50088">
    <property type="entry name" value="ANK_REPEAT"/>
    <property type="match status" value="3"/>
</dbReference>
<organism>
    <name type="scientific">Callithrix jacchus</name>
    <name type="common">White-tufted-ear marmoset</name>
    <dbReference type="NCBI Taxonomy" id="9483"/>
    <lineage>
        <taxon>Eukaryota</taxon>
        <taxon>Metazoa</taxon>
        <taxon>Chordata</taxon>
        <taxon>Craniata</taxon>
        <taxon>Vertebrata</taxon>
        <taxon>Euteleostomi</taxon>
        <taxon>Mammalia</taxon>
        <taxon>Eutheria</taxon>
        <taxon>Euarchontoglires</taxon>
        <taxon>Primates</taxon>
        <taxon>Haplorrhini</taxon>
        <taxon>Platyrrhini</taxon>
        <taxon>Cebidae</taxon>
        <taxon>Callitrichinae</taxon>
        <taxon>Callithrix</taxon>
        <taxon>Callithrix</taxon>
    </lineage>
</organism>
<proteinExistence type="inferred from homology"/>
<accession>Q2QLG0</accession>
<gene>
    <name type="primary">ASZ1</name>
    <name type="synonym">GASZ</name>
</gene>